<organism>
    <name type="scientific">Debaryomyces hansenii (strain ATCC 36239 / CBS 767 / BCRC 21394 / JCM 1990 / NBRC 0083 / IGC 2968)</name>
    <name type="common">Yeast</name>
    <name type="synonym">Torulaspora hansenii</name>
    <dbReference type="NCBI Taxonomy" id="284592"/>
    <lineage>
        <taxon>Eukaryota</taxon>
        <taxon>Fungi</taxon>
        <taxon>Dikarya</taxon>
        <taxon>Ascomycota</taxon>
        <taxon>Saccharomycotina</taxon>
        <taxon>Pichiomycetes</taxon>
        <taxon>Debaryomycetaceae</taxon>
        <taxon>Debaryomyces</taxon>
    </lineage>
</organism>
<evidence type="ECO:0000250" key="1"/>
<evidence type="ECO:0000305" key="2"/>
<proteinExistence type="inferred from homology"/>
<gene>
    <name type="primary">COG6</name>
    <name type="ordered locus">DEHA2E10736g</name>
</gene>
<feature type="chain" id="PRO_0000339322" description="Conserved oligomeric Golgi complex subunit 6">
    <location>
        <begin position="1"/>
        <end position="775"/>
    </location>
</feature>
<protein>
    <recommendedName>
        <fullName>Conserved oligomeric Golgi complex subunit 6</fullName>
        <shortName>COG complex subunit 6</shortName>
    </recommendedName>
    <alternativeName>
        <fullName>Component of oligomeric Golgi complex 6</fullName>
    </alternativeName>
</protein>
<dbReference type="EMBL" id="CR382137">
    <property type="protein sequence ID" value="CAG88013.2"/>
    <property type="molecule type" value="Genomic_DNA"/>
</dbReference>
<dbReference type="RefSeq" id="XP_459774.2">
    <property type="nucleotide sequence ID" value="XM_459774.1"/>
</dbReference>
<dbReference type="SMR" id="Q6BPU6"/>
<dbReference type="FunCoup" id="Q6BPU6">
    <property type="interactions" value="280"/>
</dbReference>
<dbReference type="STRING" id="284592.Q6BPU6"/>
<dbReference type="GeneID" id="2902690"/>
<dbReference type="KEGG" id="dha:DEHA2E10736g"/>
<dbReference type="VEuPathDB" id="FungiDB:DEHA2E10736g"/>
<dbReference type="eggNOG" id="KOG3758">
    <property type="taxonomic scope" value="Eukaryota"/>
</dbReference>
<dbReference type="HOGENOM" id="CLU_017837_0_0_1"/>
<dbReference type="InParanoid" id="Q6BPU6"/>
<dbReference type="OMA" id="IINMICP"/>
<dbReference type="OrthoDB" id="272987at2759"/>
<dbReference type="Proteomes" id="UP000000599">
    <property type="component" value="Chromosome E"/>
</dbReference>
<dbReference type="GO" id="GO:0000139">
    <property type="term" value="C:Golgi membrane"/>
    <property type="evidence" value="ECO:0007669"/>
    <property type="project" value="UniProtKB-SubCell"/>
</dbReference>
<dbReference type="GO" id="GO:0017119">
    <property type="term" value="C:Golgi transport complex"/>
    <property type="evidence" value="ECO:0007669"/>
    <property type="project" value="InterPro"/>
</dbReference>
<dbReference type="GO" id="GO:0006891">
    <property type="term" value="P:intra-Golgi vesicle-mediated transport"/>
    <property type="evidence" value="ECO:0007669"/>
    <property type="project" value="InterPro"/>
</dbReference>
<dbReference type="GO" id="GO:0015031">
    <property type="term" value="P:protein transport"/>
    <property type="evidence" value="ECO:0007669"/>
    <property type="project" value="UniProtKB-KW"/>
</dbReference>
<dbReference type="InterPro" id="IPR010490">
    <property type="entry name" value="COG6"/>
</dbReference>
<dbReference type="InterPro" id="IPR048369">
    <property type="entry name" value="COG6_C"/>
</dbReference>
<dbReference type="InterPro" id="IPR048368">
    <property type="entry name" value="COG6_N"/>
</dbReference>
<dbReference type="PANTHER" id="PTHR21506">
    <property type="entry name" value="COMPONENT OF OLIGOMERIC GOLGI COMPLEX 6"/>
    <property type="match status" value="1"/>
</dbReference>
<dbReference type="PANTHER" id="PTHR21506:SF0">
    <property type="entry name" value="CONSERVED OLIGOMERIC GOLGI COMPLEX SUBUNIT 6"/>
    <property type="match status" value="1"/>
</dbReference>
<dbReference type="Pfam" id="PF20653">
    <property type="entry name" value="COG6_C"/>
    <property type="match status" value="1"/>
</dbReference>
<dbReference type="Pfam" id="PF06419">
    <property type="entry name" value="COG6_N"/>
    <property type="match status" value="1"/>
</dbReference>
<dbReference type="SMART" id="SM01087">
    <property type="entry name" value="COG6"/>
    <property type="match status" value="1"/>
</dbReference>
<keyword id="KW-0333">Golgi apparatus</keyword>
<keyword id="KW-0472">Membrane</keyword>
<keyword id="KW-0653">Protein transport</keyword>
<keyword id="KW-1185">Reference proteome</keyword>
<keyword id="KW-0813">Transport</keyword>
<sequence length="775" mass="88725">MDFIDFDSFQQDEIPQPQPALSLPITSNIENLGKRFSNFNSLTKNLLKFDEKDDIKVDGDESEETKLAEKYANLSLNLINSLEDDNEEENESDLNRSKTTTTLSTRLSRVLNNSMPDSLVREIFANLDLKIENIAALVEPGITGSNSRKKLRGEIENDLIKTQGLMLKEYQPVIKNLSNLENDLKNLNGLRDSITEKVNKDFQSTKDLNGEVKNLNDTKSLINLKKGLLISFQNKFALDVYEEYVLQNGEINDEFFQVLIKCEKIHENCSILLSVDNPQLGLKIMSKFNQLINKSVERIINFTNKTLNNLYSLNTTTKLTTLHQCLKFLRKRLNYFNTVIDNFVDTRSRLIIDEFLNQINGDLDKSGDNRSGSIQHDRPIILSAHDPVRFIGDLLAYIHSVVVNETETISSIFGISKEENEDDDIEYKDIIDDVTGRILNSLSRSVKSKIEQVITSETKLATIYAIYSLVELYTIMFAKHLKESSNDKHNLLMTVRELVSSSQNKIISIIQNKLTTIKSSNSAQLELNTDLQPPEWIIEFYSDILPIIDQNTSDTFMNLSTENNAEFMKMIINKPIEIFNEHIENNISKLFNRRDQVILKLNFLDLILSKIMPIILLSDKILELNDLTEKLSLELTNLQLDSLISGCQLTNFYNIINMICPFSDDFFDVSIYQPITENKLFSEDNIIAANDIIQNFLPSALLDIQQSLFKVNSPMIVNNIITNSSLEFIKFYLKFNLIINEYLDDASLIWSDIEVATLLGVEEPYQQTKKSMSFD</sequence>
<accession>Q6BPU6</accession>
<comment type="function">
    <text evidence="1">Acts as a component of the peripheral membrane COG complex that is involved in intra-Golgi protein trafficking. COG is located at the cis-Golgi, and regulates tethering of retrograde intra-Golgi vesicles and possibly a number of other membrane trafficking events (By similarity).</text>
</comment>
<comment type="subcellular location">
    <subcellularLocation>
        <location evidence="1">Golgi apparatus membrane</location>
        <topology evidence="1">Peripheral membrane protein</topology>
    </subcellularLocation>
</comment>
<comment type="similarity">
    <text evidence="2">Belongs to the COG6 family.</text>
</comment>
<reference key="1">
    <citation type="journal article" date="2004" name="Nature">
        <title>Genome evolution in yeasts.</title>
        <authorList>
            <person name="Dujon B."/>
            <person name="Sherman D."/>
            <person name="Fischer G."/>
            <person name="Durrens P."/>
            <person name="Casaregola S."/>
            <person name="Lafontaine I."/>
            <person name="de Montigny J."/>
            <person name="Marck C."/>
            <person name="Neuveglise C."/>
            <person name="Talla E."/>
            <person name="Goffard N."/>
            <person name="Frangeul L."/>
            <person name="Aigle M."/>
            <person name="Anthouard V."/>
            <person name="Babour A."/>
            <person name="Barbe V."/>
            <person name="Barnay S."/>
            <person name="Blanchin S."/>
            <person name="Beckerich J.-M."/>
            <person name="Beyne E."/>
            <person name="Bleykasten C."/>
            <person name="Boisrame A."/>
            <person name="Boyer J."/>
            <person name="Cattolico L."/>
            <person name="Confanioleri F."/>
            <person name="de Daruvar A."/>
            <person name="Despons L."/>
            <person name="Fabre E."/>
            <person name="Fairhead C."/>
            <person name="Ferry-Dumazet H."/>
            <person name="Groppi A."/>
            <person name="Hantraye F."/>
            <person name="Hennequin C."/>
            <person name="Jauniaux N."/>
            <person name="Joyet P."/>
            <person name="Kachouri R."/>
            <person name="Kerrest A."/>
            <person name="Koszul R."/>
            <person name="Lemaire M."/>
            <person name="Lesur I."/>
            <person name="Ma L."/>
            <person name="Muller H."/>
            <person name="Nicaud J.-M."/>
            <person name="Nikolski M."/>
            <person name="Oztas S."/>
            <person name="Ozier-Kalogeropoulos O."/>
            <person name="Pellenz S."/>
            <person name="Potier S."/>
            <person name="Richard G.-F."/>
            <person name="Straub M.-L."/>
            <person name="Suleau A."/>
            <person name="Swennen D."/>
            <person name="Tekaia F."/>
            <person name="Wesolowski-Louvel M."/>
            <person name="Westhof E."/>
            <person name="Wirth B."/>
            <person name="Zeniou-Meyer M."/>
            <person name="Zivanovic Y."/>
            <person name="Bolotin-Fukuhara M."/>
            <person name="Thierry A."/>
            <person name="Bouchier C."/>
            <person name="Caudron B."/>
            <person name="Scarpelli C."/>
            <person name="Gaillardin C."/>
            <person name="Weissenbach J."/>
            <person name="Wincker P."/>
            <person name="Souciet J.-L."/>
        </authorList>
    </citation>
    <scope>NUCLEOTIDE SEQUENCE [LARGE SCALE GENOMIC DNA]</scope>
    <source>
        <strain>ATCC 36239 / CBS 767 / BCRC 21394 / JCM 1990 / NBRC 0083 / IGC 2968</strain>
    </source>
</reference>
<name>COG6_DEBHA</name>